<protein>
    <recommendedName>
        <fullName evidence="1">Ketol-acid reductoisomerase (NADP(+))</fullName>
        <shortName evidence="1">KARI</shortName>
        <ecNumber evidence="1">1.1.1.86</ecNumber>
    </recommendedName>
    <alternativeName>
        <fullName evidence="1">Acetohydroxy-acid isomeroreductase</fullName>
        <shortName evidence="1">AHIR</shortName>
    </alternativeName>
    <alternativeName>
        <fullName evidence="1">Alpha-keto-beta-hydroxylacyl reductoisomerase</fullName>
    </alternativeName>
    <alternativeName>
        <fullName evidence="1">Ketol-acid reductoisomerase type 2</fullName>
    </alternativeName>
    <alternativeName>
        <fullName evidence="1">Ketol-acid reductoisomerase type II</fullName>
    </alternativeName>
</protein>
<gene>
    <name evidence="1" type="primary">ilvC</name>
    <name type="ordered locus">Spro_4751</name>
</gene>
<name>ILVC_SERP5</name>
<feature type="chain" id="PRO_1000060233" description="Ketol-acid reductoisomerase (NADP(+))">
    <location>
        <begin position="1"/>
        <end position="491"/>
    </location>
</feature>
<feature type="domain" description="KARI N-terminal Rossmann" evidence="2">
    <location>
        <begin position="15"/>
        <end position="208"/>
    </location>
</feature>
<feature type="domain" description="KARI C-terminal knotted 1" evidence="3">
    <location>
        <begin position="209"/>
        <end position="344"/>
    </location>
</feature>
<feature type="domain" description="KARI C-terminal knotted 2" evidence="3">
    <location>
        <begin position="345"/>
        <end position="484"/>
    </location>
</feature>
<feature type="active site" evidence="1">
    <location>
        <position position="132"/>
    </location>
</feature>
<feature type="binding site" evidence="1">
    <location>
        <begin position="45"/>
        <end position="48"/>
    </location>
    <ligand>
        <name>NADP(+)</name>
        <dbReference type="ChEBI" id="CHEBI:58349"/>
    </ligand>
</feature>
<feature type="binding site" evidence="1">
    <location>
        <position position="68"/>
    </location>
    <ligand>
        <name>NADP(+)</name>
        <dbReference type="ChEBI" id="CHEBI:58349"/>
    </ligand>
</feature>
<feature type="binding site" evidence="1">
    <location>
        <position position="76"/>
    </location>
    <ligand>
        <name>NADP(+)</name>
        <dbReference type="ChEBI" id="CHEBI:58349"/>
    </ligand>
</feature>
<feature type="binding site" evidence="1">
    <location>
        <position position="78"/>
    </location>
    <ligand>
        <name>NADP(+)</name>
        <dbReference type="ChEBI" id="CHEBI:58349"/>
    </ligand>
</feature>
<feature type="binding site" evidence="1">
    <location>
        <begin position="108"/>
        <end position="110"/>
    </location>
    <ligand>
        <name>NADP(+)</name>
        <dbReference type="ChEBI" id="CHEBI:58349"/>
    </ligand>
</feature>
<feature type="binding site" evidence="1">
    <location>
        <position position="158"/>
    </location>
    <ligand>
        <name>NADP(+)</name>
        <dbReference type="ChEBI" id="CHEBI:58349"/>
    </ligand>
</feature>
<feature type="binding site" evidence="1">
    <location>
        <position position="217"/>
    </location>
    <ligand>
        <name>Mg(2+)</name>
        <dbReference type="ChEBI" id="CHEBI:18420"/>
        <label>1</label>
    </ligand>
</feature>
<feature type="binding site" evidence="1">
    <location>
        <position position="217"/>
    </location>
    <ligand>
        <name>Mg(2+)</name>
        <dbReference type="ChEBI" id="CHEBI:18420"/>
        <label>2</label>
    </ligand>
</feature>
<feature type="binding site" evidence="1">
    <location>
        <position position="221"/>
    </location>
    <ligand>
        <name>Mg(2+)</name>
        <dbReference type="ChEBI" id="CHEBI:18420"/>
        <label>1</label>
    </ligand>
</feature>
<feature type="binding site" evidence="1">
    <location>
        <position position="389"/>
    </location>
    <ligand>
        <name>Mg(2+)</name>
        <dbReference type="ChEBI" id="CHEBI:18420"/>
        <label>2</label>
    </ligand>
</feature>
<feature type="binding site" evidence="1">
    <location>
        <position position="393"/>
    </location>
    <ligand>
        <name>Mg(2+)</name>
        <dbReference type="ChEBI" id="CHEBI:18420"/>
        <label>2</label>
    </ligand>
</feature>
<feature type="binding site" evidence="1">
    <location>
        <position position="414"/>
    </location>
    <ligand>
        <name>substrate</name>
    </ligand>
</feature>
<organism>
    <name type="scientific">Serratia proteamaculans (strain 568)</name>
    <dbReference type="NCBI Taxonomy" id="399741"/>
    <lineage>
        <taxon>Bacteria</taxon>
        <taxon>Pseudomonadati</taxon>
        <taxon>Pseudomonadota</taxon>
        <taxon>Gammaproteobacteria</taxon>
        <taxon>Enterobacterales</taxon>
        <taxon>Yersiniaceae</taxon>
        <taxon>Serratia</taxon>
    </lineage>
</organism>
<reference key="1">
    <citation type="submission" date="2007-09" db="EMBL/GenBank/DDBJ databases">
        <title>Complete sequence of chromosome of Serratia proteamaculans 568.</title>
        <authorList>
            <consortium name="US DOE Joint Genome Institute"/>
            <person name="Copeland A."/>
            <person name="Lucas S."/>
            <person name="Lapidus A."/>
            <person name="Barry K."/>
            <person name="Glavina del Rio T."/>
            <person name="Dalin E."/>
            <person name="Tice H."/>
            <person name="Pitluck S."/>
            <person name="Chain P."/>
            <person name="Malfatti S."/>
            <person name="Shin M."/>
            <person name="Vergez L."/>
            <person name="Schmutz J."/>
            <person name="Larimer F."/>
            <person name="Land M."/>
            <person name="Hauser L."/>
            <person name="Kyrpides N."/>
            <person name="Kim E."/>
            <person name="Taghavi S."/>
            <person name="Newman L."/>
            <person name="Vangronsveld J."/>
            <person name="van der Lelie D."/>
            <person name="Richardson P."/>
        </authorList>
    </citation>
    <scope>NUCLEOTIDE SEQUENCE [LARGE SCALE GENOMIC DNA]</scope>
    <source>
        <strain>568</strain>
    </source>
</reference>
<keyword id="KW-0028">Amino-acid biosynthesis</keyword>
<keyword id="KW-0100">Branched-chain amino acid biosynthesis</keyword>
<keyword id="KW-0460">Magnesium</keyword>
<keyword id="KW-0479">Metal-binding</keyword>
<keyword id="KW-0521">NADP</keyword>
<keyword id="KW-0560">Oxidoreductase</keyword>
<keyword id="KW-0677">Repeat</keyword>
<accession>A8GL54</accession>
<comment type="function">
    <text evidence="1">Involved in the biosynthesis of branched-chain amino acids (BCAA). Catalyzes an alkyl-migration followed by a ketol-acid reduction of (S)-2-acetolactate (S2AL) to yield (R)-2,3-dihydroxy-isovalerate. In the isomerase reaction, S2AL is rearranged via a Mg-dependent methyl migration to produce 3-hydroxy-3-methyl-2-ketobutyrate (HMKB). In the reductase reaction, this 2-ketoacid undergoes a metal-dependent reduction by NADPH to yield (R)-2,3-dihydroxy-isovalerate.</text>
</comment>
<comment type="catalytic activity">
    <reaction evidence="1">
        <text>(2R)-2,3-dihydroxy-3-methylbutanoate + NADP(+) = (2S)-2-acetolactate + NADPH + H(+)</text>
        <dbReference type="Rhea" id="RHEA:22068"/>
        <dbReference type="ChEBI" id="CHEBI:15378"/>
        <dbReference type="ChEBI" id="CHEBI:49072"/>
        <dbReference type="ChEBI" id="CHEBI:57783"/>
        <dbReference type="ChEBI" id="CHEBI:58349"/>
        <dbReference type="ChEBI" id="CHEBI:58476"/>
        <dbReference type="EC" id="1.1.1.86"/>
    </reaction>
</comment>
<comment type="catalytic activity">
    <reaction evidence="1">
        <text>(2R,3R)-2,3-dihydroxy-3-methylpentanoate + NADP(+) = (S)-2-ethyl-2-hydroxy-3-oxobutanoate + NADPH + H(+)</text>
        <dbReference type="Rhea" id="RHEA:13493"/>
        <dbReference type="ChEBI" id="CHEBI:15378"/>
        <dbReference type="ChEBI" id="CHEBI:49256"/>
        <dbReference type="ChEBI" id="CHEBI:49258"/>
        <dbReference type="ChEBI" id="CHEBI:57783"/>
        <dbReference type="ChEBI" id="CHEBI:58349"/>
        <dbReference type="EC" id="1.1.1.86"/>
    </reaction>
</comment>
<comment type="cofactor">
    <cofactor evidence="1">
        <name>Mg(2+)</name>
        <dbReference type="ChEBI" id="CHEBI:18420"/>
    </cofactor>
    <text evidence="1">Binds 2 magnesium ions per subunit.</text>
</comment>
<comment type="pathway">
    <text evidence="1">Amino-acid biosynthesis; L-isoleucine biosynthesis; L-isoleucine from 2-oxobutanoate: step 2/4.</text>
</comment>
<comment type="pathway">
    <text evidence="1">Amino-acid biosynthesis; L-valine biosynthesis; L-valine from pyruvate: step 2/4.</text>
</comment>
<comment type="similarity">
    <text evidence="1">Belongs to the ketol-acid reductoisomerase family.</text>
</comment>
<dbReference type="EC" id="1.1.1.86" evidence="1"/>
<dbReference type="EMBL" id="CP000826">
    <property type="protein sequence ID" value="ABV43844.1"/>
    <property type="molecule type" value="Genomic_DNA"/>
</dbReference>
<dbReference type="SMR" id="A8GL54"/>
<dbReference type="STRING" id="399741.Spro_4751"/>
<dbReference type="KEGG" id="spe:Spro_4751"/>
<dbReference type="eggNOG" id="COG0059">
    <property type="taxonomic scope" value="Bacteria"/>
</dbReference>
<dbReference type="HOGENOM" id="CLU_551905_0_0_6"/>
<dbReference type="OrthoDB" id="9804088at2"/>
<dbReference type="UniPathway" id="UPA00047">
    <property type="reaction ID" value="UER00056"/>
</dbReference>
<dbReference type="UniPathway" id="UPA00049">
    <property type="reaction ID" value="UER00060"/>
</dbReference>
<dbReference type="GO" id="GO:0005829">
    <property type="term" value="C:cytosol"/>
    <property type="evidence" value="ECO:0007669"/>
    <property type="project" value="TreeGrafter"/>
</dbReference>
<dbReference type="GO" id="GO:0004455">
    <property type="term" value="F:ketol-acid reductoisomerase activity"/>
    <property type="evidence" value="ECO:0007669"/>
    <property type="project" value="UniProtKB-UniRule"/>
</dbReference>
<dbReference type="GO" id="GO:0000287">
    <property type="term" value="F:magnesium ion binding"/>
    <property type="evidence" value="ECO:0007669"/>
    <property type="project" value="UniProtKB-UniRule"/>
</dbReference>
<dbReference type="GO" id="GO:0009097">
    <property type="term" value="P:isoleucine biosynthetic process"/>
    <property type="evidence" value="ECO:0007669"/>
    <property type="project" value="UniProtKB-UniRule"/>
</dbReference>
<dbReference type="GO" id="GO:0009099">
    <property type="term" value="P:L-valine biosynthetic process"/>
    <property type="evidence" value="ECO:0007669"/>
    <property type="project" value="UniProtKB-UniRule"/>
</dbReference>
<dbReference type="FunFam" id="1.10.1040.10:FF:000007">
    <property type="entry name" value="Ketol-acid reductoisomerase (NADP(+))"/>
    <property type="match status" value="1"/>
</dbReference>
<dbReference type="FunFam" id="3.40.50.720:FF:000043">
    <property type="entry name" value="Ketol-acid reductoisomerase (NADP(+))"/>
    <property type="match status" value="1"/>
</dbReference>
<dbReference type="Gene3D" id="1.10.1040.10">
    <property type="entry name" value="N-(1-d-carboxylethyl)-l-norvaline Dehydrogenase, domain 2"/>
    <property type="match status" value="1"/>
</dbReference>
<dbReference type="Gene3D" id="3.40.50.720">
    <property type="entry name" value="NAD(P)-binding Rossmann-like Domain"/>
    <property type="match status" value="1"/>
</dbReference>
<dbReference type="HAMAP" id="MF_00435">
    <property type="entry name" value="IlvC"/>
    <property type="match status" value="1"/>
</dbReference>
<dbReference type="InterPro" id="IPR008927">
    <property type="entry name" value="6-PGluconate_DH-like_C_sf"/>
</dbReference>
<dbReference type="InterPro" id="IPR013328">
    <property type="entry name" value="6PGD_dom2"/>
</dbReference>
<dbReference type="InterPro" id="IPR013023">
    <property type="entry name" value="KARI"/>
</dbReference>
<dbReference type="InterPro" id="IPR000506">
    <property type="entry name" value="KARI_C"/>
</dbReference>
<dbReference type="InterPro" id="IPR013116">
    <property type="entry name" value="KARI_N"/>
</dbReference>
<dbReference type="InterPro" id="IPR036291">
    <property type="entry name" value="NAD(P)-bd_dom_sf"/>
</dbReference>
<dbReference type="NCBIfam" id="TIGR00465">
    <property type="entry name" value="ilvC"/>
    <property type="match status" value="1"/>
</dbReference>
<dbReference type="NCBIfam" id="NF003557">
    <property type="entry name" value="PRK05225.1"/>
    <property type="match status" value="1"/>
</dbReference>
<dbReference type="PANTHER" id="PTHR21371">
    <property type="entry name" value="KETOL-ACID REDUCTOISOMERASE, MITOCHONDRIAL"/>
    <property type="match status" value="1"/>
</dbReference>
<dbReference type="PANTHER" id="PTHR21371:SF1">
    <property type="entry name" value="KETOL-ACID REDUCTOISOMERASE, MITOCHONDRIAL"/>
    <property type="match status" value="1"/>
</dbReference>
<dbReference type="Pfam" id="PF01450">
    <property type="entry name" value="KARI_C"/>
    <property type="match status" value="2"/>
</dbReference>
<dbReference type="Pfam" id="PF07991">
    <property type="entry name" value="KARI_N"/>
    <property type="match status" value="1"/>
</dbReference>
<dbReference type="SUPFAM" id="SSF48179">
    <property type="entry name" value="6-phosphogluconate dehydrogenase C-terminal domain-like"/>
    <property type="match status" value="2"/>
</dbReference>
<dbReference type="SUPFAM" id="SSF51735">
    <property type="entry name" value="NAD(P)-binding Rossmann-fold domains"/>
    <property type="match status" value="1"/>
</dbReference>
<dbReference type="PROSITE" id="PS51851">
    <property type="entry name" value="KARI_C"/>
    <property type="match status" value="2"/>
</dbReference>
<dbReference type="PROSITE" id="PS51850">
    <property type="entry name" value="KARI_N"/>
    <property type="match status" value="1"/>
</dbReference>
<sequence length="491" mass="53781">MANYFNTLNLRQQLAQLGKCRFMAREEFADEAGYLKGKKVVIVGCGAQGLNQGLNMRDSGLDVAYALRKEAIDEKRPSWRKATENGFKVGTYEDLIPQADLVVNLTPDKQHTSVVRAVQPLMKDGAALGYSHGFNIVEVGEQVRKDITVVMVAPKCPGTEVREEYKRGFGVPTLIAVHPENDPKGEGMAIAKAWAAATGGHRAGVLESSFVAEVKSDLMGEQTILCGMLQAGSLLCFDKLVAEGTDPAYAEKLIQFGWETITEALKQGGITLMMDRLSNPAKLRAYALSEQLKGIMAPLFQKHMDDIISGAFSGGMMADWAEDDVKLLNWREETGKSAFENAPQFEGKISEQEYFDHGVLMVAMVKAGVELAFETMVDAGIIEESAYYESLHELPLIANTIARKRLYEMNVVISDTAEYGNYLFANAAVPLLKEFMTTLQAGDLGKSVAGTSVDNAQLRDVNEAVRNHPIESVGRKLRGYMTDMKRIAVAG</sequence>
<proteinExistence type="inferred from homology"/>
<evidence type="ECO:0000255" key="1">
    <source>
        <dbReference type="HAMAP-Rule" id="MF_00435"/>
    </source>
</evidence>
<evidence type="ECO:0000255" key="2">
    <source>
        <dbReference type="PROSITE-ProRule" id="PRU01197"/>
    </source>
</evidence>
<evidence type="ECO:0000255" key="3">
    <source>
        <dbReference type="PROSITE-ProRule" id="PRU01198"/>
    </source>
</evidence>